<gene>
    <name evidence="1" type="primary">psaB</name>
    <name type="ORF">PA049</name>
</gene>
<evidence type="ECO:0000255" key="1">
    <source>
        <dbReference type="HAMAP-Rule" id="MF_00482"/>
    </source>
</evidence>
<evidence type="ECO:0000305" key="2"/>
<protein>
    <recommendedName>
        <fullName evidence="1">Photosystem I P700 chlorophyll a apoprotein A2</fullName>
        <ecNumber evidence="1">1.97.1.12</ecNumber>
    </recommendedName>
    <alternativeName>
        <fullName evidence="1">PSI-B</fullName>
    </alternativeName>
    <alternativeName>
        <fullName evidence="1">PsaB</fullName>
    </alternativeName>
</protein>
<keyword id="KW-0004">4Fe-4S</keyword>
<keyword id="KW-0148">Chlorophyll</keyword>
<keyword id="KW-0150">Chloroplast</keyword>
<keyword id="KW-0157">Chromophore</keyword>
<keyword id="KW-0249">Electron transport</keyword>
<keyword id="KW-0408">Iron</keyword>
<keyword id="KW-0411">Iron-sulfur</keyword>
<keyword id="KW-0460">Magnesium</keyword>
<keyword id="KW-0472">Membrane</keyword>
<keyword id="KW-0479">Metal-binding</keyword>
<keyword id="KW-0560">Oxidoreductase</keyword>
<keyword id="KW-0602">Photosynthesis</keyword>
<keyword id="KW-0603">Photosystem I</keyword>
<keyword id="KW-0934">Plastid</keyword>
<keyword id="KW-0793">Thylakoid</keyword>
<keyword id="KW-0812">Transmembrane</keyword>
<keyword id="KW-1133">Transmembrane helix</keyword>
<keyword id="KW-0813">Transport</keyword>
<dbReference type="EC" id="1.97.1.12" evidence="1"/>
<dbReference type="EMBL" id="AY522331">
    <property type="protein sequence ID" value="AAS46183.1"/>
    <property type="status" value="ALT_INIT"/>
    <property type="molecule type" value="Genomic_DNA"/>
</dbReference>
<dbReference type="RefSeq" id="YP_009305303.1">
    <property type="nucleotide sequence ID" value="NC_031333.1"/>
</dbReference>
<dbReference type="SMR" id="P0C356"/>
<dbReference type="GeneID" id="29141362"/>
<dbReference type="GO" id="GO:0009535">
    <property type="term" value="C:chloroplast thylakoid membrane"/>
    <property type="evidence" value="ECO:0007669"/>
    <property type="project" value="UniProtKB-SubCell"/>
</dbReference>
<dbReference type="GO" id="GO:0009522">
    <property type="term" value="C:photosystem I"/>
    <property type="evidence" value="ECO:0007669"/>
    <property type="project" value="UniProtKB-KW"/>
</dbReference>
<dbReference type="GO" id="GO:0009536">
    <property type="term" value="C:plastid"/>
    <property type="evidence" value="ECO:0000305"/>
    <property type="project" value="Gramene"/>
</dbReference>
<dbReference type="GO" id="GO:0051539">
    <property type="term" value="F:4 iron, 4 sulfur cluster binding"/>
    <property type="evidence" value="ECO:0007669"/>
    <property type="project" value="UniProtKB-KW"/>
</dbReference>
<dbReference type="GO" id="GO:0016168">
    <property type="term" value="F:chlorophyll binding"/>
    <property type="evidence" value="ECO:0007669"/>
    <property type="project" value="UniProtKB-KW"/>
</dbReference>
<dbReference type="GO" id="GO:0009055">
    <property type="term" value="F:electron transfer activity"/>
    <property type="evidence" value="ECO:0007669"/>
    <property type="project" value="UniProtKB-UniRule"/>
</dbReference>
<dbReference type="GO" id="GO:0000287">
    <property type="term" value="F:magnesium ion binding"/>
    <property type="evidence" value="ECO:0007669"/>
    <property type="project" value="UniProtKB-UniRule"/>
</dbReference>
<dbReference type="GO" id="GO:0016491">
    <property type="term" value="F:oxidoreductase activity"/>
    <property type="evidence" value="ECO:0007669"/>
    <property type="project" value="UniProtKB-KW"/>
</dbReference>
<dbReference type="GO" id="GO:0015979">
    <property type="term" value="P:photosynthesis"/>
    <property type="evidence" value="ECO:0007669"/>
    <property type="project" value="UniProtKB-UniRule"/>
</dbReference>
<dbReference type="FunFam" id="1.20.1130.10:FF:000001">
    <property type="entry name" value="Photosystem I P700 chlorophyll a apoprotein A2"/>
    <property type="match status" value="1"/>
</dbReference>
<dbReference type="Gene3D" id="1.20.1130.10">
    <property type="entry name" value="Photosystem I PsaA/PsaB"/>
    <property type="match status" value="1"/>
</dbReference>
<dbReference type="HAMAP" id="MF_00482">
    <property type="entry name" value="PSI_PsaB"/>
    <property type="match status" value="1"/>
</dbReference>
<dbReference type="InterPro" id="IPR001280">
    <property type="entry name" value="PSI_PsaA/B"/>
</dbReference>
<dbReference type="InterPro" id="IPR020586">
    <property type="entry name" value="PSI_PsaA/B_CS"/>
</dbReference>
<dbReference type="InterPro" id="IPR036408">
    <property type="entry name" value="PSI_PsaA/B_sf"/>
</dbReference>
<dbReference type="InterPro" id="IPR006244">
    <property type="entry name" value="PSI_PsaB"/>
</dbReference>
<dbReference type="NCBIfam" id="TIGR01336">
    <property type="entry name" value="psaB"/>
    <property type="match status" value="1"/>
</dbReference>
<dbReference type="PANTHER" id="PTHR30128">
    <property type="entry name" value="OUTER MEMBRANE PROTEIN, OMPA-RELATED"/>
    <property type="match status" value="1"/>
</dbReference>
<dbReference type="PANTHER" id="PTHR30128:SF19">
    <property type="entry name" value="PHOTOSYSTEM I P700 CHLOROPHYLL A APOPROTEIN A1-RELATED"/>
    <property type="match status" value="1"/>
</dbReference>
<dbReference type="Pfam" id="PF00223">
    <property type="entry name" value="PsaA_PsaB"/>
    <property type="match status" value="1"/>
</dbReference>
<dbReference type="PIRSF" id="PIRSF002905">
    <property type="entry name" value="PSI_A"/>
    <property type="match status" value="1"/>
</dbReference>
<dbReference type="PRINTS" id="PR00257">
    <property type="entry name" value="PHOTSYSPSAAB"/>
</dbReference>
<dbReference type="SUPFAM" id="SSF81558">
    <property type="entry name" value="Photosystem I subunits PsaA/PsaB"/>
    <property type="match status" value="1"/>
</dbReference>
<dbReference type="PROSITE" id="PS00419">
    <property type="entry name" value="PHOTOSYSTEM_I_PSAAB"/>
    <property type="match status" value="1"/>
</dbReference>
<name>PSAB_ORYSA</name>
<sequence>MELRFPRFSQGLAQDPTTRRIWFGIATAHDFESHDDITEERLYQNIFASHFGQLAIIFLWTSGNLFHVAWQGNFESWIQDPLHVRPIAHAIWDPHFGQPAVEAFTRGGAAGPVNIAYSGVYQWWYTIGLRTNEDLYTGALFLLFLSTLSLIGGWLHLQPKWKPSLSWFKNAESRLNHHLSGLFGVSSLAWTGHLVHVAIPASRGEYVRWNNFLDVLPYPQGLGPLLTGQWNLYAQNPDSSNHLFGTTQGAGTAILTLLGGFHPQTQSLWLTDIAHHHLAIAFIFLIAGHMYRTNFGIGHSIKDLLEAHTPPGGRLGRGHKGLYDTINNSIHFQLGLALASLGVITSLVAQHMYSLPSYAFIAQDFTTQAALYTHHQYIAGFIMTGAFAHGAIFFIRDYNPEQNEDNVLARMLDHKEAIISHLSWASLFLGFHTLGLYVHNDVMLAFGTPEKQILIEPIFAQWIQSAHGKTTYGFDILLSSTSGPAFNAGRTLWLPGWLNAVNENSNSLFLTIGPGDFLVHHAIALGLHTTTLILVKGALDARGSKLMPDKKDFGYSFPCDGPGRGGTCDISAWDAFYLAVFWMLNTIGWVTFYWHWKHITLWQGNVSQFNESSTYLMGWLRDYLWLNSSQLINGYNPFGMNSLSVWAWMFLFGHLVWATGFMFLISWRGYWQELIETLAWAHERTPLANLIRWRDKPVALSIVQARLVGLAHFSVGYIFTYAAFLIASTSGKFG</sequence>
<accession>P0C356</accession>
<accession>P12156</accession>
<accession>Q6QXU8</accession>
<accession>Q6QY75</accession>
<organism>
    <name type="scientific">Oryza sativa</name>
    <name type="common">Rice</name>
    <dbReference type="NCBI Taxonomy" id="4530"/>
    <lineage>
        <taxon>Eukaryota</taxon>
        <taxon>Viridiplantae</taxon>
        <taxon>Streptophyta</taxon>
        <taxon>Embryophyta</taxon>
        <taxon>Tracheophyta</taxon>
        <taxon>Spermatophyta</taxon>
        <taxon>Magnoliopsida</taxon>
        <taxon>Liliopsida</taxon>
        <taxon>Poales</taxon>
        <taxon>Poaceae</taxon>
        <taxon>BOP clade</taxon>
        <taxon>Oryzoideae</taxon>
        <taxon>Oryzeae</taxon>
        <taxon>Oryzinae</taxon>
        <taxon>Oryza</taxon>
    </lineage>
</organism>
<geneLocation type="chloroplast"/>
<reference key="1">
    <citation type="journal article" date="2004" name="Plant Physiol.">
        <title>A comparison of rice chloroplast genomes.</title>
        <authorList>
            <person name="Tang J."/>
            <person name="Xia H."/>
            <person name="Cao M."/>
            <person name="Zhang X."/>
            <person name="Zeng W."/>
            <person name="Hu S."/>
            <person name="Tong W."/>
            <person name="Wang J."/>
            <person name="Wang J."/>
            <person name="Yu J."/>
            <person name="Yang H."/>
            <person name="Zhu L."/>
        </authorList>
    </citation>
    <scope>NUCLEOTIDE SEQUENCE [LARGE SCALE GENOMIC DNA]</scope>
    <source>
        <strain>cv. PA64s</strain>
    </source>
</reference>
<feature type="chain" id="PRO_0000088628" description="Photosystem I P700 chlorophyll a apoprotein A2">
    <location>
        <begin position="1"/>
        <end position="734"/>
    </location>
</feature>
<feature type="transmembrane region" description="Helical; Name=I" evidence="1">
    <location>
        <begin position="46"/>
        <end position="69"/>
    </location>
</feature>
<feature type="transmembrane region" description="Helical; Name=II" evidence="1">
    <location>
        <begin position="135"/>
        <end position="158"/>
    </location>
</feature>
<feature type="transmembrane region" description="Helical; Name=III" evidence="1">
    <location>
        <begin position="175"/>
        <end position="199"/>
    </location>
</feature>
<feature type="transmembrane region" description="Helical; Name=IV" evidence="1">
    <location>
        <begin position="273"/>
        <end position="291"/>
    </location>
</feature>
<feature type="transmembrane region" description="Helical; Name=V" evidence="1">
    <location>
        <begin position="330"/>
        <end position="353"/>
    </location>
</feature>
<feature type="transmembrane region" description="Helical; Name=VI" evidence="1">
    <location>
        <begin position="369"/>
        <end position="395"/>
    </location>
</feature>
<feature type="transmembrane region" description="Helical; Name=VII" evidence="1">
    <location>
        <begin position="417"/>
        <end position="439"/>
    </location>
</feature>
<feature type="transmembrane region" description="Helical; Name=VIII" evidence="1">
    <location>
        <begin position="517"/>
        <end position="535"/>
    </location>
</feature>
<feature type="transmembrane region" description="Helical; Name=IX" evidence="1">
    <location>
        <begin position="575"/>
        <end position="596"/>
    </location>
</feature>
<feature type="transmembrane region" description="Helical; Name=X" evidence="1">
    <location>
        <begin position="643"/>
        <end position="665"/>
    </location>
</feature>
<feature type="transmembrane region" description="Helical; Name=XI" evidence="1">
    <location>
        <begin position="707"/>
        <end position="727"/>
    </location>
</feature>
<feature type="binding site" evidence="1">
    <location>
        <position position="559"/>
    </location>
    <ligand>
        <name>[4Fe-4S] cluster</name>
        <dbReference type="ChEBI" id="CHEBI:49883"/>
        <note>ligand shared between dimeric partners</note>
    </ligand>
</feature>
<feature type="binding site" evidence="1">
    <location>
        <position position="568"/>
    </location>
    <ligand>
        <name>[4Fe-4S] cluster</name>
        <dbReference type="ChEBI" id="CHEBI:49883"/>
        <note>ligand shared between dimeric partners</note>
    </ligand>
</feature>
<feature type="binding site" description="axial binding residue" evidence="1">
    <location>
        <position position="654"/>
    </location>
    <ligand>
        <name>chlorophyll a</name>
        <dbReference type="ChEBI" id="CHEBI:58416"/>
        <label>B1</label>
    </ligand>
    <ligandPart>
        <name>Mg</name>
        <dbReference type="ChEBI" id="CHEBI:25107"/>
    </ligandPart>
</feature>
<feature type="binding site" description="axial binding residue" evidence="1">
    <location>
        <position position="662"/>
    </location>
    <ligand>
        <name>chlorophyll a</name>
        <dbReference type="ChEBI" id="CHEBI:58416"/>
        <label>B3</label>
    </ligand>
    <ligandPart>
        <name>Mg</name>
        <dbReference type="ChEBI" id="CHEBI:25107"/>
    </ligandPart>
</feature>
<feature type="binding site" evidence="1">
    <location>
        <position position="670"/>
    </location>
    <ligand>
        <name>chlorophyll a</name>
        <dbReference type="ChEBI" id="CHEBI:58416"/>
        <label>B3</label>
    </ligand>
</feature>
<feature type="binding site" evidence="1">
    <location>
        <position position="671"/>
    </location>
    <ligand>
        <name>phylloquinone</name>
        <dbReference type="ChEBI" id="CHEBI:18067"/>
        <label>B</label>
    </ligand>
</feature>
<proteinExistence type="inferred from homology"/>
<comment type="function">
    <text evidence="1">PsaA and PsaB bind P700, the primary electron donor of photosystem I (PSI), as well as the electron acceptors A0, A1 and FX. PSI is a plastocyanin-ferredoxin oxidoreductase, converting photonic excitation into a charge separation, which transfers an electron from the donor P700 chlorophyll pair to the spectroscopically characterized acceptors A0, A1, FX, FA and FB in turn. Oxidized P700 is reduced on the lumenal side of the thylakoid membrane by plastocyanin.</text>
</comment>
<comment type="catalytic activity">
    <reaction evidence="1">
        <text>reduced [plastocyanin] + hnu + oxidized [2Fe-2S]-[ferredoxin] = oxidized [plastocyanin] + reduced [2Fe-2S]-[ferredoxin]</text>
        <dbReference type="Rhea" id="RHEA:30407"/>
        <dbReference type="Rhea" id="RHEA-COMP:10000"/>
        <dbReference type="Rhea" id="RHEA-COMP:10001"/>
        <dbReference type="Rhea" id="RHEA-COMP:10039"/>
        <dbReference type="Rhea" id="RHEA-COMP:10040"/>
        <dbReference type="ChEBI" id="CHEBI:29036"/>
        <dbReference type="ChEBI" id="CHEBI:30212"/>
        <dbReference type="ChEBI" id="CHEBI:33737"/>
        <dbReference type="ChEBI" id="CHEBI:33738"/>
        <dbReference type="ChEBI" id="CHEBI:49552"/>
        <dbReference type="EC" id="1.97.1.12"/>
    </reaction>
</comment>
<comment type="cofactor">
    <text evidence="1">P700 is a chlorophyll a/chlorophyll a' dimer, A0 is one or more chlorophyll a, A1 is one or both phylloquinones and FX is a shared 4Fe-4S iron-sulfur center.</text>
</comment>
<comment type="subunit">
    <text evidence="1">The PsaA/B heterodimer binds the P700 chlorophyll special pair and subsequent electron acceptors. PSI consists of a core antenna complex that captures photons, and an electron transfer chain that converts photonic excitation into a charge separation. The eukaryotic PSI reaction center is composed of at least 11 subunits.</text>
</comment>
<comment type="subcellular location">
    <subcellularLocation>
        <location evidence="1">Plastid</location>
        <location evidence="1">Chloroplast thylakoid membrane</location>
        <topology evidence="1">Multi-pass membrane protein</topology>
    </subcellularLocation>
</comment>
<comment type="similarity">
    <text evidence="1">Belongs to the PsaA/PsaB family.</text>
</comment>
<comment type="sequence caution" evidence="2">
    <conflict type="erroneous initiation">
        <sequence resource="EMBL-CDS" id="AAS46183"/>
    </conflict>
</comment>